<reference key="1">
    <citation type="journal article" date="2005" name="Mol. Biol. Evol.">
        <title>The chloroplast genome sequence of the green alga Pseudendoclonium akinetum (Ulvophyceae) reveals unusual structural features and new insights into the branching order of chlorophyte lineages.</title>
        <authorList>
            <person name="Pombert J.-F."/>
            <person name="Otis C."/>
            <person name="Lemieux C."/>
            <person name="Turmel M."/>
        </authorList>
    </citation>
    <scope>NUCLEOTIDE SEQUENCE [LARGE SCALE GENOMIC DNA]</scope>
    <source>
        <strain>UTEX 1912</strain>
    </source>
</reference>
<keyword id="KW-0007">Acetylation</keyword>
<keyword id="KW-0106">Calcium</keyword>
<keyword id="KW-0148">Chlorophyll</keyword>
<keyword id="KW-0150">Chloroplast</keyword>
<keyword id="KW-0157">Chromophore</keyword>
<keyword id="KW-0249">Electron transport</keyword>
<keyword id="KW-0359">Herbicide resistance</keyword>
<keyword id="KW-0408">Iron</keyword>
<keyword id="KW-0460">Magnesium</keyword>
<keyword id="KW-0464">Manganese</keyword>
<keyword id="KW-0472">Membrane</keyword>
<keyword id="KW-0479">Metal-binding</keyword>
<keyword id="KW-0560">Oxidoreductase</keyword>
<keyword id="KW-0597">Phosphoprotein</keyword>
<keyword id="KW-0602">Photosynthesis</keyword>
<keyword id="KW-0604">Photosystem II</keyword>
<keyword id="KW-0934">Plastid</keyword>
<keyword id="KW-0793">Thylakoid</keyword>
<keyword id="KW-0812">Transmembrane</keyword>
<keyword id="KW-1133">Transmembrane helix</keyword>
<keyword id="KW-0813">Transport</keyword>
<accession>Q3ZJ60</accession>
<comment type="function">
    <text evidence="1">Photosystem II (PSII) is a light-driven water:plastoquinone oxidoreductase that uses light energy to abstract electrons from H(2)O, generating O(2) and a proton gradient subsequently used for ATP formation. It consists of a core antenna complex that captures photons, and an electron transfer chain that converts photonic excitation into a charge separation. The D1/D2 (PsbA/PsbD) reaction center heterodimer binds P680, the primary electron donor of PSII as well as several subsequent electron acceptors.</text>
</comment>
<comment type="catalytic activity">
    <reaction evidence="1">
        <text>2 a plastoquinone + 4 hnu + 2 H2O = 2 a plastoquinol + O2</text>
        <dbReference type="Rhea" id="RHEA:36359"/>
        <dbReference type="Rhea" id="RHEA-COMP:9561"/>
        <dbReference type="Rhea" id="RHEA-COMP:9562"/>
        <dbReference type="ChEBI" id="CHEBI:15377"/>
        <dbReference type="ChEBI" id="CHEBI:15379"/>
        <dbReference type="ChEBI" id="CHEBI:17757"/>
        <dbReference type="ChEBI" id="CHEBI:30212"/>
        <dbReference type="ChEBI" id="CHEBI:62192"/>
        <dbReference type="EC" id="1.10.3.9"/>
    </reaction>
</comment>
<comment type="cofactor">
    <text evidence="1">The D1/D2 heterodimer binds P680, chlorophylls that are the primary electron donor of PSII, and subsequent electron acceptors. It shares a non-heme iron and each subunit binds pheophytin, quinone, additional chlorophylls, carotenoids and lipids. D1 provides most of the ligands for the Mn4-Ca-O5 cluster of the oxygen-evolving complex (OEC). There is also a Cl(-1) ion associated with D1 and D2, which is required for oxygen evolution. The PSII complex binds additional chlorophylls, carotenoids and specific lipids.</text>
</comment>
<comment type="subunit">
    <text evidence="1">PSII is composed of 1 copy each of membrane proteins PsbA, PsbB, PsbC, PsbD, PsbE, PsbF, PsbH, PsbI, PsbJ, PsbK, PsbL, PsbM, PsbT, PsbX, PsbY, PsbZ, Psb30/Ycf12, at least 3 peripheral proteins of the oxygen-evolving complex and a large number of cofactors. It forms dimeric complexes.</text>
</comment>
<comment type="subcellular location">
    <subcellularLocation>
        <location evidence="1">Plastid</location>
        <location evidence="1">Chloroplast thylakoid membrane</location>
        <topology evidence="1">Multi-pass membrane protein</topology>
    </subcellularLocation>
</comment>
<comment type="PTM">
    <text evidence="1">Tyr-161 forms a radical intermediate that is referred to as redox-active TyrZ, YZ or Y-Z.</text>
</comment>
<comment type="PTM">
    <text evidence="1">C-terminally processed by CTPA; processing is essential to allow assembly of the oxygen-evolving complex and thus photosynthetic growth.</text>
</comment>
<comment type="miscellaneous">
    <text evidence="1">2 of the reaction center chlorophylls (ChlD1 and ChlD2) are entirely coordinated by water.</text>
</comment>
<comment type="miscellaneous">
    <text evidence="1">Herbicides such as atrazine, BNT, diuron or ioxynil bind in the Q(B) binding site and block subsequent electron transfer.</text>
</comment>
<comment type="similarity">
    <text evidence="1">Belongs to the reaction center PufL/M/PsbA/D family.</text>
</comment>
<organism>
    <name type="scientific">Tupiella akineta</name>
    <name type="common">Green alga</name>
    <name type="synonym">Pseudendoclonium akinetum</name>
    <dbReference type="NCBI Taxonomy" id="160070"/>
    <lineage>
        <taxon>Eukaryota</taxon>
        <taxon>Viridiplantae</taxon>
        <taxon>Chlorophyta</taxon>
        <taxon>Ulvophyceae</taxon>
        <taxon>OUU clade</taxon>
        <taxon>Ulotrichales</taxon>
        <taxon>Tupiellaceae</taxon>
        <taxon>Tupiella</taxon>
    </lineage>
</organism>
<protein>
    <recommendedName>
        <fullName evidence="1">Photosystem II protein D1</fullName>
        <shortName evidence="1">PSII D1 protein</shortName>
        <ecNumber evidence="1">1.10.3.9</ecNumber>
    </recommendedName>
    <alternativeName>
        <fullName evidence="1">Photosystem II Q(B) protein</fullName>
    </alternativeName>
</protein>
<gene>
    <name evidence="1" type="primary">psbA</name>
</gene>
<proteinExistence type="inferred from homology"/>
<geneLocation type="chloroplast"/>
<name>PSBA_TUPAK</name>
<feature type="initiator methionine" description="Removed" evidence="1">
    <location>
        <position position="1"/>
    </location>
</feature>
<feature type="chain" id="PRO_0000340060" description="Photosystem II protein D1" evidence="1">
    <location>
        <begin position="2"/>
        <end position="344"/>
    </location>
</feature>
<feature type="propeptide" id="PRO_0000340061" evidence="1">
    <location>
        <begin position="345"/>
        <end position="353"/>
    </location>
</feature>
<feature type="transmembrane region" description="Helical" evidence="1">
    <location>
        <begin position="29"/>
        <end position="46"/>
    </location>
</feature>
<feature type="transmembrane region" description="Helical" evidence="1">
    <location>
        <begin position="118"/>
        <end position="133"/>
    </location>
</feature>
<feature type="transmembrane region" description="Helical" evidence="1">
    <location>
        <begin position="142"/>
        <end position="156"/>
    </location>
</feature>
<feature type="transmembrane region" description="Helical" evidence="1">
    <location>
        <begin position="197"/>
        <end position="218"/>
    </location>
</feature>
<feature type="transmembrane region" description="Helical" evidence="1">
    <location>
        <begin position="274"/>
        <end position="288"/>
    </location>
</feature>
<feature type="binding site" description="axial binding residue" evidence="1">
    <location>
        <position position="118"/>
    </location>
    <ligand>
        <name>chlorophyll a</name>
        <dbReference type="ChEBI" id="CHEBI:58416"/>
        <label>ChlzD1</label>
    </ligand>
    <ligandPart>
        <name>Mg</name>
        <dbReference type="ChEBI" id="CHEBI:25107"/>
    </ligandPart>
</feature>
<feature type="binding site" evidence="1">
    <location>
        <position position="126"/>
    </location>
    <ligand>
        <name>pheophytin a</name>
        <dbReference type="ChEBI" id="CHEBI:136840"/>
        <label>D1</label>
    </ligand>
</feature>
<feature type="binding site" evidence="1">
    <location>
        <position position="170"/>
    </location>
    <ligand>
        <name>[CaMn4O5] cluster</name>
        <dbReference type="ChEBI" id="CHEBI:189552"/>
    </ligand>
</feature>
<feature type="binding site" evidence="1">
    <location>
        <position position="189"/>
    </location>
    <ligand>
        <name>[CaMn4O5] cluster</name>
        <dbReference type="ChEBI" id="CHEBI:189552"/>
    </ligand>
</feature>
<feature type="binding site" description="axial binding residue" evidence="1">
    <location>
        <position position="198"/>
    </location>
    <ligand>
        <name>chlorophyll a</name>
        <dbReference type="ChEBI" id="CHEBI:58416"/>
        <label>PD1</label>
    </ligand>
    <ligandPart>
        <name>Mg</name>
        <dbReference type="ChEBI" id="CHEBI:25107"/>
    </ligandPart>
</feature>
<feature type="binding site" evidence="1">
    <location>
        <position position="215"/>
    </location>
    <ligand>
        <name>a quinone</name>
        <dbReference type="ChEBI" id="CHEBI:132124"/>
        <label>B</label>
    </ligand>
</feature>
<feature type="binding site" evidence="1">
    <location>
        <position position="215"/>
    </location>
    <ligand>
        <name>Fe cation</name>
        <dbReference type="ChEBI" id="CHEBI:24875"/>
        <note>ligand shared with heterodimeric partner</note>
    </ligand>
</feature>
<feature type="binding site" evidence="1">
    <location>
        <begin position="264"/>
        <end position="265"/>
    </location>
    <ligand>
        <name>a quinone</name>
        <dbReference type="ChEBI" id="CHEBI:132124"/>
        <label>B</label>
    </ligand>
</feature>
<feature type="binding site" evidence="1">
    <location>
        <position position="272"/>
    </location>
    <ligand>
        <name>Fe cation</name>
        <dbReference type="ChEBI" id="CHEBI:24875"/>
        <note>ligand shared with heterodimeric partner</note>
    </ligand>
</feature>
<feature type="binding site" evidence="1">
    <location>
        <position position="332"/>
    </location>
    <ligand>
        <name>[CaMn4O5] cluster</name>
        <dbReference type="ChEBI" id="CHEBI:189552"/>
    </ligand>
</feature>
<feature type="binding site" evidence="1">
    <location>
        <position position="333"/>
    </location>
    <ligand>
        <name>[CaMn4O5] cluster</name>
        <dbReference type="ChEBI" id="CHEBI:189552"/>
    </ligand>
</feature>
<feature type="binding site" evidence="1">
    <location>
        <position position="342"/>
    </location>
    <ligand>
        <name>[CaMn4O5] cluster</name>
        <dbReference type="ChEBI" id="CHEBI:189552"/>
    </ligand>
</feature>
<feature type="binding site" evidence="1">
    <location>
        <position position="344"/>
    </location>
    <ligand>
        <name>[CaMn4O5] cluster</name>
        <dbReference type="ChEBI" id="CHEBI:189552"/>
    </ligand>
</feature>
<feature type="site" description="Tyrosine radical intermediate" evidence="1">
    <location>
        <position position="161"/>
    </location>
</feature>
<feature type="site" description="Stabilizes free radical intermediate" evidence="1">
    <location>
        <position position="190"/>
    </location>
</feature>
<feature type="site" description="Cleavage; by CTPA" evidence="1">
    <location>
        <begin position="344"/>
        <end position="345"/>
    </location>
</feature>
<feature type="modified residue" description="N-acetylthreonine" evidence="1">
    <location>
        <position position="2"/>
    </location>
</feature>
<feature type="modified residue" description="Phosphothreonine" evidence="1">
    <location>
        <position position="2"/>
    </location>
</feature>
<dbReference type="EC" id="1.10.3.9" evidence="1"/>
<dbReference type="EMBL" id="AY835431">
    <property type="protein sequence ID" value="AAV80631.1"/>
    <property type="molecule type" value="Genomic_DNA"/>
</dbReference>
<dbReference type="RefSeq" id="YP_636207.1">
    <property type="nucleotide sequence ID" value="NC_008114.1"/>
</dbReference>
<dbReference type="SMR" id="Q3ZJ60"/>
<dbReference type="GeneID" id="4108811"/>
<dbReference type="GO" id="GO:0009535">
    <property type="term" value="C:chloroplast thylakoid membrane"/>
    <property type="evidence" value="ECO:0007669"/>
    <property type="project" value="UniProtKB-SubCell"/>
</dbReference>
<dbReference type="GO" id="GO:0009523">
    <property type="term" value="C:photosystem II"/>
    <property type="evidence" value="ECO:0007669"/>
    <property type="project" value="UniProtKB-KW"/>
</dbReference>
<dbReference type="GO" id="GO:0016168">
    <property type="term" value="F:chlorophyll binding"/>
    <property type="evidence" value="ECO:0007669"/>
    <property type="project" value="UniProtKB-UniRule"/>
</dbReference>
<dbReference type="GO" id="GO:0045156">
    <property type="term" value="F:electron transporter, transferring electrons within the cyclic electron transport pathway of photosynthesis activity"/>
    <property type="evidence" value="ECO:0007669"/>
    <property type="project" value="InterPro"/>
</dbReference>
<dbReference type="GO" id="GO:0005506">
    <property type="term" value="F:iron ion binding"/>
    <property type="evidence" value="ECO:0007669"/>
    <property type="project" value="UniProtKB-UniRule"/>
</dbReference>
<dbReference type="GO" id="GO:0016682">
    <property type="term" value="F:oxidoreductase activity, acting on diphenols and related substances as donors, oxygen as acceptor"/>
    <property type="evidence" value="ECO:0007669"/>
    <property type="project" value="UniProtKB-UniRule"/>
</dbReference>
<dbReference type="GO" id="GO:0010242">
    <property type="term" value="F:oxygen evolving activity"/>
    <property type="evidence" value="ECO:0007669"/>
    <property type="project" value="UniProtKB-EC"/>
</dbReference>
<dbReference type="GO" id="GO:0009772">
    <property type="term" value="P:photosynthetic electron transport in photosystem II"/>
    <property type="evidence" value="ECO:0007669"/>
    <property type="project" value="InterPro"/>
</dbReference>
<dbReference type="GO" id="GO:0009635">
    <property type="term" value="P:response to herbicide"/>
    <property type="evidence" value="ECO:0007669"/>
    <property type="project" value="UniProtKB-KW"/>
</dbReference>
<dbReference type="CDD" id="cd09289">
    <property type="entry name" value="Photosystem-II_D1"/>
    <property type="match status" value="1"/>
</dbReference>
<dbReference type="FunFam" id="1.20.85.10:FF:000002">
    <property type="entry name" value="Photosystem II protein D1"/>
    <property type="match status" value="1"/>
</dbReference>
<dbReference type="Gene3D" id="1.20.85.10">
    <property type="entry name" value="Photosystem II protein D1-like"/>
    <property type="match status" value="1"/>
</dbReference>
<dbReference type="HAMAP" id="MF_01379">
    <property type="entry name" value="PSII_PsbA_D1"/>
    <property type="match status" value="1"/>
</dbReference>
<dbReference type="InterPro" id="IPR055266">
    <property type="entry name" value="D1/D2"/>
</dbReference>
<dbReference type="InterPro" id="IPR036854">
    <property type="entry name" value="Photo_II_D1/D2_sf"/>
</dbReference>
<dbReference type="InterPro" id="IPR000484">
    <property type="entry name" value="Photo_RC_L/M"/>
</dbReference>
<dbReference type="InterPro" id="IPR055265">
    <property type="entry name" value="Photo_RC_L/M_CS"/>
</dbReference>
<dbReference type="InterPro" id="IPR005867">
    <property type="entry name" value="PSII_D1"/>
</dbReference>
<dbReference type="NCBIfam" id="TIGR01151">
    <property type="entry name" value="psbA"/>
    <property type="match status" value="1"/>
</dbReference>
<dbReference type="PANTHER" id="PTHR33149:SF12">
    <property type="entry name" value="PHOTOSYSTEM II D2 PROTEIN"/>
    <property type="match status" value="1"/>
</dbReference>
<dbReference type="PANTHER" id="PTHR33149">
    <property type="entry name" value="PHOTOSYSTEM II PROTEIN D1"/>
    <property type="match status" value="1"/>
</dbReference>
<dbReference type="Pfam" id="PF00124">
    <property type="entry name" value="Photo_RC"/>
    <property type="match status" value="1"/>
</dbReference>
<dbReference type="PRINTS" id="PR00256">
    <property type="entry name" value="REACTNCENTRE"/>
</dbReference>
<dbReference type="SUPFAM" id="SSF81483">
    <property type="entry name" value="Bacterial photosystem II reaction centre, L and M subunits"/>
    <property type="match status" value="1"/>
</dbReference>
<dbReference type="PROSITE" id="PS00244">
    <property type="entry name" value="REACTION_CENTER"/>
    <property type="match status" value="1"/>
</dbReference>
<evidence type="ECO:0000255" key="1">
    <source>
        <dbReference type="HAMAP-Rule" id="MF_01379"/>
    </source>
</evidence>
<sequence length="353" mass="38948">MTAILERREASSLWARFCEWVTSTENRLYVGWFGVIMIPTLLTAVSVFIIAFVAAPPVDIDGIREPVSGSLLYGNNIISGAIIPTSNAIGLHFYPIWEAASVDEWLYNGGPYQLIVCHFFLGICCYMGREWELSFRLGMRPWIAVAYSAPVAAATAVFIIYPIGQGSFSDGMPLGISGTFNFMIVFQAEHNILMHPFHMLGVAGVFGGSLFSAMHGSLVTSSLIRETTENESTNAGYKFGQEEETYNIVAAHGYFGRLIFQYASFNNSRSLHFFLAAWPVVGIWFTALGISTMAFNLNGFNFNQSIVDSQGRVLNSWADIINRANLGMEVMHERNAHNFPLDLASVEAPSING</sequence>